<sequence length="188" mass="20577">MDQLRQSLLEAPIIEKGDYEYFVHPVSDGVPVLRPELLREIVIKIIRKVEVDNVDKIVTPAAMGIHISTAVSLMTDIPLVVIRKRQYGLEGEVSLSQQTGYAENEMYINDVRDGERVLVLDDVLSTGGTMRAVLDALDQIGAEVVDTVAVIKKAGPNELDESDHDVKTLINVRVTDGTVVIVDSNGDG</sequence>
<comment type="function">
    <text evidence="1">May catalyze a purine salvage reaction, the substrate is unknown.</text>
</comment>
<comment type="similarity">
    <text evidence="1">Belongs to the purine/pyrimidine phosphoribosyltransferase family. Archaeal HPRT subfamily.</text>
</comment>
<accession>G0LHZ8</accession>
<protein>
    <recommendedName>
        <fullName evidence="1">HGPRTase-like protein 1</fullName>
        <ecNumber evidence="1">2.4.2.-</ecNumber>
    </recommendedName>
</protein>
<feature type="chain" id="PRO_0000415456" description="HGPRTase-like protein 1">
    <location>
        <begin position="1"/>
        <end position="188"/>
    </location>
</feature>
<proteinExistence type="inferred from homology"/>
<name>HPRL1_HALWC</name>
<dbReference type="EC" id="2.4.2.-" evidence="1"/>
<dbReference type="EMBL" id="FR746099">
    <property type="protein sequence ID" value="CCC39718.1"/>
    <property type="molecule type" value="Genomic_DNA"/>
</dbReference>
<dbReference type="RefSeq" id="WP_011570950.1">
    <property type="nucleotide sequence ID" value="NC_017459.1"/>
</dbReference>
<dbReference type="SMR" id="G0LHZ8"/>
<dbReference type="GeneID" id="12446483"/>
<dbReference type="KEGG" id="hwc:Hqrw_1789"/>
<dbReference type="HOGENOM" id="CLU_126376_0_0_2"/>
<dbReference type="OrthoDB" id="8323at2157"/>
<dbReference type="Proteomes" id="UP000007954">
    <property type="component" value="Chromosome"/>
</dbReference>
<dbReference type="GO" id="GO:0016740">
    <property type="term" value="F:transferase activity"/>
    <property type="evidence" value="ECO:0007669"/>
    <property type="project" value="UniProtKB-KW"/>
</dbReference>
<dbReference type="GO" id="GO:0006166">
    <property type="term" value="P:purine ribonucleoside salvage"/>
    <property type="evidence" value="ECO:0007669"/>
    <property type="project" value="UniProtKB-KW"/>
</dbReference>
<dbReference type="CDD" id="cd06223">
    <property type="entry name" value="PRTases_typeI"/>
    <property type="match status" value="1"/>
</dbReference>
<dbReference type="Gene3D" id="3.40.50.2020">
    <property type="match status" value="1"/>
</dbReference>
<dbReference type="HAMAP" id="MF_01467">
    <property type="entry name" value="Hypx_phosphoribosyltr"/>
    <property type="match status" value="1"/>
</dbReference>
<dbReference type="InterPro" id="IPR026597">
    <property type="entry name" value="HGPRTase-like"/>
</dbReference>
<dbReference type="InterPro" id="IPR000836">
    <property type="entry name" value="PRibTrfase_dom"/>
</dbReference>
<dbReference type="InterPro" id="IPR029057">
    <property type="entry name" value="PRTase-like"/>
</dbReference>
<dbReference type="InterPro" id="IPR050118">
    <property type="entry name" value="Pur/Pyrimidine_PRTase"/>
</dbReference>
<dbReference type="NCBIfam" id="NF040646">
    <property type="entry name" value="HPT_Archaea"/>
    <property type="match status" value="1"/>
</dbReference>
<dbReference type="NCBIfam" id="NF002635">
    <property type="entry name" value="PRK02304.1-4"/>
    <property type="match status" value="1"/>
</dbReference>
<dbReference type="PANTHER" id="PTHR43864">
    <property type="entry name" value="HYPOXANTHINE/GUANINE PHOSPHORIBOSYLTRANSFERASE"/>
    <property type="match status" value="1"/>
</dbReference>
<dbReference type="PANTHER" id="PTHR43864:SF1">
    <property type="entry name" value="XANTHINE PHOSPHORIBOSYLTRANSFERASE"/>
    <property type="match status" value="1"/>
</dbReference>
<dbReference type="Pfam" id="PF00156">
    <property type="entry name" value="Pribosyltran"/>
    <property type="match status" value="1"/>
</dbReference>
<dbReference type="SUPFAM" id="SSF53271">
    <property type="entry name" value="PRTase-like"/>
    <property type="match status" value="1"/>
</dbReference>
<dbReference type="PROSITE" id="PS00103">
    <property type="entry name" value="PUR_PYR_PR_TRANSFER"/>
    <property type="match status" value="1"/>
</dbReference>
<reference key="1">
    <citation type="journal article" date="2011" name="PLoS ONE">
        <title>Haloquadratum walsbyi: limited diversity in a global pond.</title>
        <authorList>
            <person name="Dyall-Smith M."/>
            <person name="Pfeiffer F."/>
            <person name="Klee K."/>
            <person name="Palm P."/>
            <person name="Gross K."/>
            <person name="Schuster S.C."/>
            <person name="Rampp M."/>
            <person name="Oesterhelt D."/>
        </authorList>
    </citation>
    <scope>NUCLEOTIDE SEQUENCE [LARGE SCALE GENOMIC DNA]</scope>
    <source>
        <strain>DSM 16854 / JCM 12705 / C23</strain>
    </source>
</reference>
<gene>
    <name type="ordered locus">Hqrw_1789</name>
</gene>
<organism>
    <name type="scientific">Haloquadratum walsbyi (strain DSM 16854 / JCM 12705 / C23)</name>
    <dbReference type="NCBI Taxonomy" id="768065"/>
    <lineage>
        <taxon>Archaea</taxon>
        <taxon>Methanobacteriati</taxon>
        <taxon>Methanobacteriota</taxon>
        <taxon>Stenosarchaea group</taxon>
        <taxon>Halobacteria</taxon>
        <taxon>Halobacteriales</taxon>
        <taxon>Haloferacaceae</taxon>
        <taxon>Haloquadratum</taxon>
    </lineage>
</organism>
<evidence type="ECO:0000255" key="1">
    <source>
        <dbReference type="HAMAP-Rule" id="MF_01467"/>
    </source>
</evidence>
<keyword id="KW-0660">Purine salvage</keyword>
<keyword id="KW-0808">Transferase</keyword>